<reference key="1">
    <citation type="journal article" date="2007" name="PLoS Biol.">
        <title>Evolution of symbiotic bacteria in the distal human intestine.</title>
        <authorList>
            <person name="Xu J."/>
            <person name="Mahowald M.A."/>
            <person name="Ley R.E."/>
            <person name="Lozupone C.A."/>
            <person name="Hamady M."/>
            <person name="Martens E.C."/>
            <person name="Henrissat B."/>
            <person name="Coutinho P.M."/>
            <person name="Minx P."/>
            <person name="Latreille P."/>
            <person name="Cordum H."/>
            <person name="Van Brunt A."/>
            <person name="Kim K."/>
            <person name="Fulton R.S."/>
            <person name="Fulton L.A."/>
            <person name="Clifton S.W."/>
            <person name="Wilson R.K."/>
            <person name="Knight R.D."/>
            <person name="Gordon J.I."/>
        </authorList>
    </citation>
    <scope>NUCLEOTIDE SEQUENCE [LARGE SCALE GENOMIC DNA]</scope>
    <source>
        <strain>ATCC 8482 / DSM 1447 / JCM 5826 / CCUG 4940 / NBRC 14291 / NCTC 11154</strain>
    </source>
</reference>
<proteinExistence type="inferred from homology"/>
<evidence type="ECO:0000255" key="1">
    <source>
        <dbReference type="HAMAP-Rule" id="MF_00291"/>
    </source>
</evidence>
<evidence type="ECO:0000256" key="2">
    <source>
        <dbReference type="SAM" id="MobiDB-lite"/>
    </source>
</evidence>
<evidence type="ECO:0000305" key="3"/>
<feature type="chain" id="PRO_1000003894" description="Small ribosomal subunit protein uS2">
    <location>
        <begin position="1"/>
        <end position="279"/>
    </location>
</feature>
<feature type="region of interest" description="Disordered" evidence="2">
    <location>
        <begin position="232"/>
        <end position="260"/>
    </location>
</feature>
<organism>
    <name type="scientific">Phocaeicola vulgatus (strain ATCC 8482 / DSM 1447 / JCM 5826 / CCUG 4940 / NBRC 14291 / NCTC 11154)</name>
    <name type="common">Bacteroides vulgatus</name>
    <dbReference type="NCBI Taxonomy" id="435590"/>
    <lineage>
        <taxon>Bacteria</taxon>
        <taxon>Pseudomonadati</taxon>
        <taxon>Bacteroidota</taxon>
        <taxon>Bacteroidia</taxon>
        <taxon>Bacteroidales</taxon>
        <taxon>Bacteroidaceae</taxon>
        <taxon>Phocaeicola</taxon>
    </lineage>
</organism>
<sequence>MSRTNFDTLLEAGCHFGHLKRKWNPSMAPYIFMERNGIHIIDLHKTVAKVDEAADALKQIAKSGKKVLFVATKKQAKQVVAEKAASVNMPYVIERWPGGMLTNFPTIRKAVKKMATIDKLTNDGTYSNLSKREVLQISRQRAKLEKNLGSIADLTRLPSALFVIDVLKENIAVREANRLGIPVFAIVDTNSDPSNVDFVIPANDDATKSVEVILDACCGAIAEGLEERKAEKVDMEAAGENAPKGAGKKKNTKARMDKAEEEAINAAKAAAFLKEDEEA</sequence>
<gene>
    <name evidence="1" type="primary">rpsB</name>
    <name type="ordered locus">BVU_1634</name>
</gene>
<keyword id="KW-0687">Ribonucleoprotein</keyword>
<keyword id="KW-0689">Ribosomal protein</keyword>
<accession>A6L0V1</accession>
<comment type="similarity">
    <text evidence="1">Belongs to the universal ribosomal protein uS2 family.</text>
</comment>
<name>RS2_PHOV8</name>
<protein>
    <recommendedName>
        <fullName evidence="1">Small ribosomal subunit protein uS2</fullName>
    </recommendedName>
    <alternativeName>
        <fullName evidence="3">30S ribosomal protein S2</fullName>
    </alternativeName>
</protein>
<dbReference type="EMBL" id="CP000139">
    <property type="protein sequence ID" value="ABR39315.1"/>
    <property type="molecule type" value="Genomic_DNA"/>
</dbReference>
<dbReference type="RefSeq" id="WP_005839199.1">
    <property type="nucleotide sequence ID" value="NZ_JANSWM010000064.1"/>
</dbReference>
<dbReference type="SMR" id="A6L0V1"/>
<dbReference type="STRING" id="435590.BVU_1634"/>
<dbReference type="PaxDb" id="435590-BVU_1634"/>
<dbReference type="GeneID" id="82152293"/>
<dbReference type="KEGG" id="bvu:BVU_1634"/>
<dbReference type="eggNOG" id="COG0052">
    <property type="taxonomic scope" value="Bacteria"/>
</dbReference>
<dbReference type="HOGENOM" id="CLU_040318_0_2_10"/>
<dbReference type="BioCyc" id="BVUL435590:G1G59-1719-MONOMER"/>
<dbReference type="Proteomes" id="UP000002861">
    <property type="component" value="Chromosome"/>
</dbReference>
<dbReference type="GO" id="GO:0022627">
    <property type="term" value="C:cytosolic small ribosomal subunit"/>
    <property type="evidence" value="ECO:0007669"/>
    <property type="project" value="TreeGrafter"/>
</dbReference>
<dbReference type="GO" id="GO:0003735">
    <property type="term" value="F:structural constituent of ribosome"/>
    <property type="evidence" value="ECO:0007669"/>
    <property type="project" value="InterPro"/>
</dbReference>
<dbReference type="GO" id="GO:0006412">
    <property type="term" value="P:translation"/>
    <property type="evidence" value="ECO:0007669"/>
    <property type="project" value="UniProtKB-UniRule"/>
</dbReference>
<dbReference type="CDD" id="cd01425">
    <property type="entry name" value="RPS2"/>
    <property type="match status" value="1"/>
</dbReference>
<dbReference type="FunFam" id="1.10.287.610:FF:000001">
    <property type="entry name" value="30S ribosomal protein S2"/>
    <property type="match status" value="1"/>
</dbReference>
<dbReference type="Gene3D" id="3.40.50.10490">
    <property type="entry name" value="Glucose-6-phosphate isomerase like protein, domain 1"/>
    <property type="match status" value="1"/>
</dbReference>
<dbReference type="Gene3D" id="1.10.287.610">
    <property type="entry name" value="Helix hairpin bin"/>
    <property type="match status" value="1"/>
</dbReference>
<dbReference type="HAMAP" id="MF_00291_B">
    <property type="entry name" value="Ribosomal_uS2_B"/>
    <property type="match status" value="1"/>
</dbReference>
<dbReference type="InterPro" id="IPR001865">
    <property type="entry name" value="Ribosomal_uS2"/>
</dbReference>
<dbReference type="InterPro" id="IPR005706">
    <property type="entry name" value="Ribosomal_uS2_bac/mit/plastid"/>
</dbReference>
<dbReference type="InterPro" id="IPR018130">
    <property type="entry name" value="Ribosomal_uS2_CS"/>
</dbReference>
<dbReference type="InterPro" id="IPR023591">
    <property type="entry name" value="Ribosomal_uS2_flav_dom_sf"/>
</dbReference>
<dbReference type="NCBIfam" id="TIGR01011">
    <property type="entry name" value="rpsB_bact"/>
    <property type="match status" value="1"/>
</dbReference>
<dbReference type="PANTHER" id="PTHR12534">
    <property type="entry name" value="30S RIBOSOMAL PROTEIN S2 PROKARYOTIC AND ORGANELLAR"/>
    <property type="match status" value="1"/>
</dbReference>
<dbReference type="PANTHER" id="PTHR12534:SF0">
    <property type="entry name" value="SMALL RIBOSOMAL SUBUNIT PROTEIN US2M"/>
    <property type="match status" value="1"/>
</dbReference>
<dbReference type="Pfam" id="PF00318">
    <property type="entry name" value="Ribosomal_S2"/>
    <property type="match status" value="1"/>
</dbReference>
<dbReference type="PRINTS" id="PR00395">
    <property type="entry name" value="RIBOSOMALS2"/>
</dbReference>
<dbReference type="SUPFAM" id="SSF52313">
    <property type="entry name" value="Ribosomal protein S2"/>
    <property type="match status" value="1"/>
</dbReference>
<dbReference type="PROSITE" id="PS00963">
    <property type="entry name" value="RIBOSOMAL_S2_2"/>
    <property type="match status" value="1"/>
</dbReference>